<proteinExistence type="evidence at protein level"/>
<feature type="signal peptide" evidence="5">
    <location>
        <begin position="1"/>
        <end position="21"/>
    </location>
</feature>
<feature type="propeptide" id="PRO_0000425191" evidence="10">
    <location>
        <begin position="22"/>
        <end position="33"/>
    </location>
</feature>
<feature type="chain" id="PRO_0000398340" description="Probable phospholipase A1 magnifin" evidence="7">
    <location>
        <begin position="34"/>
        <end position="337"/>
    </location>
</feature>
<feature type="active site" description="Nucleophile" evidence="1">
    <location>
        <position position="173"/>
    </location>
</feature>
<feature type="active site" description="Charge relay system" evidence="6">
    <location>
        <position position="201"/>
    </location>
</feature>
<feature type="active site" description="Charge relay system" evidence="6">
    <location>
        <position position="266"/>
    </location>
</feature>
<feature type="disulfide bond" evidence="1">
    <location>
        <begin position="39"/>
        <end position="123"/>
    </location>
</feature>
<feature type="disulfide bond" evidence="1">
    <location>
        <begin position="212"/>
        <end position="217"/>
    </location>
</feature>
<feature type="disulfide bond" evidence="1">
    <location>
        <begin position="255"/>
        <end position="264"/>
    </location>
</feature>
<feature type="disulfide bond" evidence="1">
    <location>
        <begin position="281"/>
        <end position="305"/>
    </location>
</feature>
<feature type="disulfide bond" evidence="1">
    <location>
        <begin position="282"/>
        <end position="330"/>
    </location>
</feature>
<feature type="disulfide bond" evidence="1">
    <location>
        <begin position="298"/>
        <end position="303"/>
    </location>
</feature>
<accession>P0CH47</accession>
<sequence>MNLKYLLLFFCLVQVLHYCYSHGDPSLSNELDRGLIPKCKLVPEQISFVLSTRENQNGVFLTLDNLSKGGILPKSDLSSIPVIFLIHGFISSANNSNYVDMTKALLEKNDCMVISIDWRDGACTHEFKILKFIGYPNAVKNTRAVGKYIADFTKLLMQKYKVSLANIRLIGHSLGAQIAGFAGKEYQKFKLGKYPEIIGLDPAGPLFKSNDCSERICETDAHYVQIIHTSNNLGTERTLGTVDFYVNNGYNQPGCYLSFLGEACSHTRAVKYFTECIRHECCLIGVPQSKNPQPVSKCTRKECVCIGLNAKTYPKTGSFYVPVESKAPYCNNKGKKI</sequence>
<keyword id="KW-0020">Allergen</keyword>
<keyword id="KW-0903">Direct protein sequencing</keyword>
<keyword id="KW-1015">Disulfide bond</keyword>
<keyword id="KW-1199">Hemostasis impairing toxin</keyword>
<keyword id="KW-0378">Hydrolase</keyword>
<keyword id="KW-0442">Lipid degradation</keyword>
<keyword id="KW-0443">Lipid metabolism</keyword>
<keyword id="KW-1202">Platelet aggregation activating toxin</keyword>
<keyword id="KW-0964">Secreted</keyword>
<keyword id="KW-0732">Signal</keyword>
<keyword id="KW-0800">Toxin</keyword>
<comment type="function">
    <text evidence="3 4 7">Catalyzes the hydrolysis of phosphatidylcholine with phospholipase A1 activity (By similarity). May act as an allergen and induce hemolytic activity (By similarity). In vivo, induces dose-dependent platelet aggregation (nanomolar concentration) and induces thrombosis (PubMed:18023835).</text>
</comment>
<comment type="catalytic activity">
    <reaction evidence="3">
        <text>a 1,2-diacyl-sn-glycero-3-phosphocholine + H2O = a 2-acyl-sn-glycero-3-phosphocholine + a fatty acid + H(+)</text>
        <dbReference type="Rhea" id="RHEA:18689"/>
        <dbReference type="ChEBI" id="CHEBI:15377"/>
        <dbReference type="ChEBI" id="CHEBI:15378"/>
        <dbReference type="ChEBI" id="CHEBI:28868"/>
        <dbReference type="ChEBI" id="CHEBI:57643"/>
        <dbReference type="ChEBI" id="CHEBI:57875"/>
        <dbReference type="EC" id="3.1.1.32"/>
    </reaction>
</comment>
<comment type="subcellular location">
    <subcellularLocation>
        <location evidence="7">Secreted</location>
    </subcellularLocation>
</comment>
<comment type="tissue specificity">
    <text evidence="10">Expressed by the venom gland.</text>
</comment>
<comment type="allergen">
    <text evidence="2">Causes an allergic reaction in human. Binds to IgE.</text>
</comment>
<comment type="similarity">
    <text evidence="9">Belongs to the AB hydrolase superfamily. Lipase family.</text>
</comment>
<evidence type="ECO:0000250" key="1">
    <source>
        <dbReference type="UniProtKB" id="A0A0M3KKW3"/>
    </source>
</evidence>
<evidence type="ECO:0000250" key="2">
    <source>
        <dbReference type="UniProtKB" id="A2VBC4"/>
    </source>
</evidence>
<evidence type="ECO:0000250" key="3">
    <source>
        <dbReference type="UniProtKB" id="P0DMB4"/>
    </source>
</evidence>
<evidence type="ECO:0000250" key="4">
    <source>
        <dbReference type="UniProtKB" id="P0DMB7"/>
    </source>
</evidence>
<evidence type="ECO:0000255" key="5"/>
<evidence type="ECO:0000255" key="6">
    <source>
        <dbReference type="PROSITE-ProRule" id="PRU10037"/>
    </source>
</evidence>
<evidence type="ECO:0000269" key="7">
    <source>
    </source>
</evidence>
<evidence type="ECO:0000303" key="8">
    <source>
    </source>
</evidence>
<evidence type="ECO:0000305" key="9"/>
<evidence type="ECO:0000305" key="10">
    <source>
    </source>
</evidence>
<organism>
    <name type="scientific">Vespa magnifica</name>
    <name type="common">Hornet</name>
    <dbReference type="NCBI Taxonomy" id="202807"/>
    <lineage>
        <taxon>Eukaryota</taxon>
        <taxon>Metazoa</taxon>
        <taxon>Ecdysozoa</taxon>
        <taxon>Arthropoda</taxon>
        <taxon>Hexapoda</taxon>
        <taxon>Insecta</taxon>
        <taxon>Pterygota</taxon>
        <taxon>Neoptera</taxon>
        <taxon>Endopterygota</taxon>
        <taxon>Hymenoptera</taxon>
        <taxon>Apocrita</taxon>
        <taxon>Aculeata</taxon>
        <taxon>Vespoidea</taxon>
        <taxon>Vespidae</taxon>
        <taxon>Vespinae</taxon>
        <taxon>Vespa</taxon>
    </lineage>
</organism>
<protein>
    <recommendedName>
        <fullName evidence="8">Probable phospholipase A1 magnifin</fullName>
        <shortName evidence="9">PLA1</shortName>
        <ecNumber evidence="3">3.1.1.32</ecNumber>
    </recommendedName>
</protein>
<reference key="1">
    <citation type="journal article" date="2008" name="Toxicon">
        <title>A phospholipase A1 platelet activator from the wasp venom of Vespa magnifica (Smith).</title>
        <authorList>
            <person name="Yang H."/>
            <person name="Xu X."/>
            <person name="Ma D."/>
            <person name="Zhang K."/>
            <person name="Lai R."/>
        </authorList>
    </citation>
    <scope>NUCLEOTIDE SEQUENCE [MRNA]</scope>
    <scope>PROTEIN SEQUENCE OF 34-48; 75-88; 169-180 AND 238-257</scope>
    <scope>FUNCTION</scope>
    <scope>SUBCELLULAR LOCATION</scope>
    <source>
        <tissue>Venom</tissue>
        <tissue>Venom gland</tissue>
    </source>
</reference>
<dbReference type="EC" id="3.1.1.32" evidence="3"/>
<dbReference type="SMR" id="P0CH47"/>
<dbReference type="ESTHER" id="vesmg-pa1">
    <property type="family name" value="Insect_Phospholipase"/>
</dbReference>
<dbReference type="GO" id="GO:0005615">
    <property type="term" value="C:extracellular space"/>
    <property type="evidence" value="ECO:0007669"/>
    <property type="project" value="TreeGrafter"/>
</dbReference>
<dbReference type="GO" id="GO:0008970">
    <property type="term" value="F:phospholipase A1 activity"/>
    <property type="evidence" value="ECO:0007669"/>
    <property type="project" value="UniProtKB-EC"/>
</dbReference>
<dbReference type="GO" id="GO:0090729">
    <property type="term" value="F:toxin activity"/>
    <property type="evidence" value="ECO:0007669"/>
    <property type="project" value="UniProtKB-KW"/>
</dbReference>
<dbReference type="GO" id="GO:0016042">
    <property type="term" value="P:lipid catabolic process"/>
    <property type="evidence" value="ECO:0007669"/>
    <property type="project" value="UniProtKB-KW"/>
</dbReference>
<dbReference type="CDD" id="cd00707">
    <property type="entry name" value="Pancreat_lipase_like"/>
    <property type="match status" value="1"/>
</dbReference>
<dbReference type="Gene3D" id="3.40.50.1820">
    <property type="entry name" value="alpha/beta hydrolase"/>
    <property type="match status" value="1"/>
</dbReference>
<dbReference type="InterPro" id="IPR029058">
    <property type="entry name" value="AB_hydrolase_fold"/>
</dbReference>
<dbReference type="InterPro" id="IPR002334">
    <property type="entry name" value="Allerg_PlipaseA1"/>
</dbReference>
<dbReference type="InterPro" id="IPR013818">
    <property type="entry name" value="Lipase"/>
</dbReference>
<dbReference type="InterPro" id="IPR033906">
    <property type="entry name" value="Lipase_N"/>
</dbReference>
<dbReference type="InterPro" id="IPR000734">
    <property type="entry name" value="TAG_lipase"/>
</dbReference>
<dbReference type="PANTHER" id="PTHR11610">
    <property type="entry name" value="LIPASE"/>
    <property type="match status" value="1"/>
</dbReference>
<dbReference type="PANTHER" id="PTHR11610:SF173">
    <property type="entry name" value="LIPASE DOMAIN-CONTAINING PROTEIN-RELATED"/>
    <property type="match status" value="1"/>
</dbReference>
<dbReference type="Pfam" id="PF00151">
    <property type="entry name" value="Lipase"/>
    <property type="match status" value="1"/>
</dbReference>
<dbReference type="PRINTS" id="PR00825">
    <property type="entry name" value="DOLALLERGEN"/>
</dbReference>
<dbReference type="PRINTS" id="PR00821">
    <property type="entry name" value="TAGLIPASE"/>
</dbReference>
<dbReference type="SUPFAM" id="SSF53474">
    <property type="entry name" value="alpha/beta-Hydrolases"/>
    <property type="match status" value="1"/>
</dbReference>
<dbReference type="PROSITE" id="PS00120">
    <property type="entry name" value="LIPASE_SER"/>
    <property type="match status" value="1"/>
</dbReference>
<name>PA1_VESMG</name>